<dbReference type="EMBL" id="CP000308">
    <property type="protein sequence ID" value="ABG14811.1"/>
    <property type="molecule type" value="Genomic_DNA"/>
</dbReference>
<dbReference type="RefSeq" id="WP_002209458.1">
    <property type="nucleotide sequence ID" value="NZ_CP009906.1"/>
</dbReference>
<dbReference type="SMR" id="Q1C411"/>
<dbReference type="GeneID" id="96664341"/>
<dbReference type="KEGG" id="ypa:YPA_2849"/>
<dbReference type="Proteomes" id="UP000001971">
    <property type="component" value="Chromosome"/>
</dbReference>
<dbReference type="GO" id="GO:0005737">
    <property type="term" value="C:cytoplasm"/>
    <property type="evidence" value="ECO:0007669"/>
    <property type="project" value="UniProtKB-ARBA"/>
</dbReference>
<dbReference type="GO" id="GO:0015935">
    <property type="term" value="C:small ribosomal subunit"/>
    <property type="evidence" value="ECO:0007669"/>
    <property type="project" value="TreeGrafter"/>
</dbReference>
<dbReference type="GO" id="GO:0003735">
    <property type="term" value="F:structural constituent of ribosome"/>
    <property type="evidence" value="ECO:0007669"/>
    <property type="project" value="InterPro"/>
</dbReference>
<dbReference type="GO" id="GO:0006412">
    <property type="term" value="P:translation"/>
    <property type="evidence" value="ECO:0007669"/>
    <property type="project" value="UniProtKB-UniRule"/>
</dbReference>
<dbReference type="FunFam" id="3.30.1320.10:FF:000001">
    <property type="entry name" value="30S ribosomal protein S16"/>
    <property type="match status" value="1"/>
</dbReference>
<dbReference type="Gene3D" id="3.30.1320.10">
    <property type="match status" value="1"/>
</dbReference>
<dbReference type="HAMAP" id="MF_00385">
    <property type="entry name" value="Ribosomal_bS16"/>
    <property type="match status" value="1"/>
</dbReference>
<dbReference type="InterPro" id="IPR000307">
    <property type="entry name" value="Ribosomal_bS16"/>
</dbReference>
<dbReference type="InterPro" id="IPR020592">
    <property type="entry name" value="Ribosomal_bS16_CS"/>
</dbReference>
<dbReference type="InterPro" id="IPR023803">
    <property type="entry name" value="Ribosomal_bS16_dom_sf"/>
</dbReference>
<dbReference type="NCBIfam" id="TIGR00002">
    <property type="entry name" value="S16"/>
    <property type="match status" value="1"/>
</dbReference>
<dbReference type="PANTHER" id="PTHR12919">
    <property type="entry name" value="30S RIBOSOMAL PROTEIN S16"/>
    <property type="match status" value="1"/>
</dbReference>
<dbReference type="PANTHER" id="PTHR12919:SF20">
    <property type="entry name" value="SMALL RIBOSOMAL SUBUNIT PROTEIN BS16M"/>
    <property type="match status" value="1"/>
</dbReference>
<dbReference type="Pfam" id="PF00886">
    <property type="entry name" value="Ribosomal_S16"/>
    <property type="match status" value="1"/>
</dbReference>
<dbReference type="SUPFAM" id="SSF54565">
    <property type="entry name" value="Ribosomal protein S16"/>
    <property type="match status" value="1"/>
</dbReference>
<dbReference type="PROSITE" id="PS00732">
    <property type="entry name" value="RIBOSOMAL_S16"/>
    <property type="match status" value="1"/>
</dbReference>
<comment type="similarity">
    <text evidence="1">Belongs to the bacterial ribosomal protein bS16 family.</text>
</comment>
<feature type="chain" id="PRO_1000049378" description="Small ribosomal subunit protein bS16">
    <location>
        <begin position="1"/>
        <end position="82"/>
    </location>
</feature>
<keyword id="KW-0687">Ribonucleoprotein</keyword>
<keyword id="KW-0689">Ribosomal protein</keyword>
<proteinExistence type="inferred from homology"/>
<reference key="1">
    <citation type="journal article" date="2006" name="J. Bacteriol.">
        <title>Complete genome sequence of Yersinia pestis strains Antiqua and Nepal516: evidence of gene reduction in an emerging pathogen.</title>
        <authorList>
            <person name="Chain P.S.G."/>
            <person name="Hu P."/>
            <person name="Malfatti S.A."/>
            <person name="Radnedge L."/>
            <person name="Larimer F."/>
            <person name="Vergez L.M."/>
            <person name="Worsham P."/>
            <person name="Chu M.C."/>
            <person name="Andersen G.L."/>
        </authorList>
    </citation>
    <scope>NUCLEOTIDE SEQUENCE [LARGE SCALE GENOMIC DNA]</scope>
    <source>
        <strain>Antiqua</strain>
    </source>
</reference>
<gene>
    <name evidence="1" type="primary">rpsP</name>
    <name type="ordered locus">YPA_2849</name>
</gene>
<sequence length="82" mass="9097">MVTIRLARGGAKKRPFYQVVVTDSRNARDGRFIERVGFFNPIASGQAEALRLDLDRIEHWIGLGATVSDRVSVLIKDAKKAA</sequence>
<protein>
    <recommendedName>
        <fullName evidence="1">Small ribosomal subunit protein bS16</fullName>
    </recommendedName>
    <alternativeName>
        <fullName evidence="2">30S ribosomal protein S16</fullName>
    </alternativeName>
</protein>
<organism>
    <name type="scientific">Yersinia pestis bv. Antiqua (strain Antiqua)</name>
    <dbReference type="NCBI Taxonomy" id="360102"/>
    <lineage>
        <taxon>Bacteria</taxon>
        <taxon>Pseudomonadati</taxon>
        <taxon>Pseudomonadota</taxon>
        <taxon>Gammaproteobacteria</taxon>
        <taxon>Enterobacterales</taxon>
        <taxon>Yersiniaceae</taxon>
        <taxon>Yersinia</taxon>
    </lineage>
</organism>
<evidence type="ECO:0000255" key="1">
    <source>
        <dbReference type="HAMAP-Rule" id="MF_00385"/>
    </source>
</evidence>
<evidence type="ECO:0000305" key="2"/>
<accession>Q1C411</accession>
<name>RS16_YERPA</name>